<geneLocation type="mitochondrion"/>
<organism>
    <name type="scientific">Capricornis sumatraensis</name>
    <name type="common">Sumatran serow</name>
    <dbReference type="NCBI Taxonomy" id="34865"/>
    <lineage>
        <taxon>Eukaryota</taxon>
        <taxon>Metazoa</taxon>
        <taxon>Chordata</taxon>
        <taxon>Craniata</taxon>
        <taxon>Vertebrata</taxon>
        <taxon>Euteleostomi</taxon>
        <taxon>Mammalia</taxon>
        <taxon>Eutheria</taxon>
        <taxon>Laurasiatheria</taxon>
        <taxon>Artiodactyla</taxon>
        <taxon>Ruminantia</taxon>
        <taxon>Pecora</taxon>
        <taxon>Bovidae</taxon>
        <taxon>Caprinae</taxon>
        <taxon>Capricornis</taxon>
    </lineage>
</organism>
<proteinExistence type="inferred from homology"/>
<protein>
    <recommendedName>
        <fullName>Cytochrome b</fullName>
    </recommendedName>
    <alternativeName>
        <fullName>Complex III subunit 3</fullName>
    </alternativeName>
    <alternativeName>
        <fullName>Complex III subunit III</fullName>
    </alternativeName>
    <alternativeName>
        <fullName>Cytochrome b-c1 complex subunit 3</fullName>
    </alternativeName>
    <alternativeName>
        <fullName>Ubiquinol-cytochrome-c reductase complex cytochrome b subunit</fullName>
    </alternativeName>
</protein>
<reference key="1">
    <citation type="journal article" date="2005" name="J. Zool. Syst. Evol. Res.">
        <title>Molecular phylogeny of caprines (Bovidae, Antilopinae): the question of their origin and diversification during the Miocene.</title>
        <authorList>
            <person name="Ropiquet A."/>
            <person name="Hassanin A."/>
        </authorList>
    </citation>
    <scope>NUCLEOTIDE SEQUENCE [GENOMIC DNA]</scope>
</reference>
<name>CYB_CAPSU</name>
<dbReference type="EMBL" id="AY669321">
    <property type="protein sequence ID" value="AAV85893.1"/>
    <property type="molecule type" value="Genomic_DNA"/>
</dbReference>
<dbReference type="SMR" id="Q5C9H5"/>
<dbReference type="GO" id="GO:0005743">
    <property type="term" value="C:mitochondrial inner membrane"/>
    <property type="evidence" value="ECO:0007669"/>
    <property type="project" value="UniProtKB-SubCell"/>
</dbReference>
<dbReference type="GO" id="GO:0045275">
    <property type="term" value="C:respiratory chain complex III"/>
    <property type="evidence" value="ECO:0007669"/>
    <property type="project" value="InterPro"/>
</dbReference>
<dbReference type="GO" id="GO:0046872">
    <property type="term" value="F:metal ion binding"/>
    <property type="evidence" value="ECO:0007669"/>
    <property type="project" value="UniProtKB-KW"/>
</dbReference>
<dbReference type="GO" id="GO:0008121">
    <property type="term" value="F:ubiquinol-cytochrome-c reductase activity"/>
    <property type="evidence" value="ECO:0007669"/>
    <property type="project" value="InterPro"/>
</dbReference>
<dbReference type="GO" id="GO:0006122">
    <property type="term" value="P:mitochondrial electron transport, ubiquinol to cytochrome c"/>
    <property type="evidence" value="ECO:0007669"/>
    <property type="project" value="TreeGrafter"/>
</dbReference>
<dbReference type="CDD" id="cd00290">
    <property type="entry name" value="cytochrome_b_C"/>
    <property type="match status" value="1"/>
</dbReference>
<dbReference type="CDD" id="cd00284">
    <property type="entry name" value="Cytochrome_b_N"/>
    <property type="match status" value="1"/>
</dbReference>
<dbReference type="FunFam" id="1.20.810.10:FF:000002">
    <property type="entry name" value="Cytochrome b"/>
    <property type="match status" value="1"/>
</dbReference>
<dbReference type="Gene3D" id="1.20.810.10">
    <property type="entry name" value="Cytochrome Bc1 Complex, Chain C"/>
    <property type="match status" value="1"/>
</dbReference>
<dbReference type="InterPro" id="IPR005798">
    <property type="entry name" value="Cyt_b/b6_C"/>
</dbReference>
<dbReference type="InterPro" id="IPR036150">
    <property type="entry name" value="Cyt_b/b6_C_sf"/>
</dbReference>
<dbReference type="InterPro" id="IPR005797">
    <property type="entry name" value="Cyt_b/b6_N"/>
</dbReference>
<dbReference type="InterPro" id="IPR027387">
    <property type="entry name" value="Cytb/b6-like_sf"/>
</dbReference>
<dbReference type="InterPro" id="IPR030689">
    <property type="entry name" value="Cytochrome_b"/>
</dbReference>
<dbReference type="InterPro" id="IPR048260">
    <property type="entry name" value="Cytochrome_b_C_euk/bac"/>
</dbReference>
<dbReference type="InterPro" id="IPR048259">
    <property type="entry name" value="Cytochrome_b_N_euk/bac"/>
</dbReference>
<dbReference type="InterPro" id="IPR016174">
    <property type="entry name" value="Di-haem_cyt_TM"/>
</dbReference>
<dbReference type="PANTHER" id="PTHR19271">
    <property type="entry name" value="CYTOCHROME B"/>
    <property type="match status" value="1"/>
</dbReference>
<dbReference type="PANTHER" id="PTHR19271:SF16">
    <property type="entry name" value="CYTOCHROME B"/>
    <property type="match status" value="1"/>
</dbReference>
<dbReference type="Pfam" id="PF00032">
    <property type="entry name" value="Cytochrom_B_C"/>
    <property type="match status" value="1"/>
</dbReference>
<dbReference type="Pfam" id="PF00033">
    <property type="entry name" value="Cytochrome_B"/>
    <property type="match status" value="1"/>
</dbReference>
<dbReference type="PIRSF" id="PIRSF038885">
    <property type="entry name" value="COB"/>
    <property type="match status" value="1"/>
</dbReference>
<dbReference type="SUPFAM" id="SSF81648">
    <property type="entry name" value="a domain/subunit of cytochrome bc1 complex (Ubiquinol-cytochrome c reductase)"/>
    <property type="match status" value="1"/>
</dbReference>
<dbReference type="SUPFAM" id="SSF81342">
    <property type="entry name" value="Transmembrane di-heme cytochromes"/>
    <property type="match status" value="1"/>
</dbReference>
<dbReference type="PROSITE" id="PS51003">
    <property type="entry name" value="CYTB_CTER"/>
    <property type="match status" value="1"/>
</dbReference>
<dbReference type="PROSITE" id="PS51002">
    <property type="entry name" value="CYTB_NTER"/>
    <property type="match status" value="1"/>
</dbReference>
<accession>Q5C9H5</accession>
<comment type="function">
    <text evidence="2">Component of the ubiquinol-cytochrome c reductase complex (complex III or cytochrome b-c1 complex) that is part of the mitochondrial respiratory chain. The b-c1 complex mediates electron transfer from ubiquinol to cytochrome c. Contributes to the generation of a proton gradient across the mitochondrial membrane that is then used for ATP synthesis.</text>
</comment>
<comment type="cofactor">
    <cofactor evidence="2">
        <name>heme b</name>
        <dbReference type="ChEBI" id="CHEBI:60344"/>
    </cofactor>
    <text evidence="2">Binds 2 heme b groups non-covalently.</text>
</comment>
<comment type="subunit">
    <text evidence="2">The cytochrome bc1 complex contains 11 subunits: 3 respiratory subunits (MT-CYB, CYC1 and UQCRFS1), 2 core proteins (UQCRC1 and UQCRC2) and 6 low-molecular weight proteins (UQCRH/QCR6, UQCRB/QCR7, UQCRQ/QCR8, UQCR10/QCR9, UQCR11/QCR10 and a cleavage product of UQCRFS1). This cytochrome bc1 complex then forms a dimer.</text>
</comment>
<comment type="subcellular location">
    <subcellularLocation>
        <location evidence="2">Mitochondrion inner membrane</location>
        <topology evidence="2">Multi-pass membrane protein</topology>
    </subcellularLocation>
</comment>
<comment type="miscellaneous">
    <text evidence="1">Heme 1 (or BL or b562) is low-potential and absorbs at about 562 nm, and heme 2 (or BH or b566) is high-potential and absorbs at about 566 nm.</text>
</comment>
<comment type="similarity">
    <text evidence="3 4">Belongs to the cytochrome b family.</text>
</comment>
<comment type="caution">
    <text evidence="2">The full-length protein contains only eight transmembrane helices, not nine as predicted by bioinformatics tools.</text>
</comment>
<gene>
    <name type="primary">MT-CYB</name>
    <name type="synonym">COB</name>
    <name type="synonym">CYTB</name>
    <name type="synonym">MTCYB</name>
</gene>
<keyword id="KW-0249">Electron transport</keyword>
<keyword id="KW-0349">Heme</keyword>
<keyword id="KW-0408">Iron</keyword>
<keyword id="KW-0472">Membrane</keyword>
<keyword id="KW-0479">Metal-binding</keyword>
<keyword id="KW-0496">Mitochondrion</keyword>
<keyword id="KW-0999">Mitochondrion inner membrane</keyword>
<keyword id="KW-0679">Respiratory chain</keyword>
<keyword id="KW-0812">Transmembrane</keyword>
<keyword id="KW-1133">Transmembrane helix</keyword>
<keyword id="KW-0813">Transport</keyword>
<keyword id="KW-0830">Ubiquinone</keyword>
<sequence length="379" mass="42825">MTNIRKTHPLMKIVNNAFIDLPTPSNISSWWNFGSLLGICLILQILTGLFLAMHYTSDTTTAFSSVTHICRDVNYGWIIRYMHANGASMFFICLFMHVGRGLYYGSYTFLETWNIGVILLLTTMATAFMGYVLPWGQMSFWGATVITNLLSAIPYIGTNLVEWIWGGFSVDKATLTRFFAFHFILPFIIMALAMVHLLFLHETGSNNPTGIPSDTDKIPFHPYYTIKDILGAMLLILTLMLLVLFTPDLLGDPDNYTPANPLNTPPHIKPEWYFLFAYAILRSIPNKLGGVLALVLSILILALVPFLHTSKQRSMMFRPISQCLFWILVADLLTLTWIGGQPVEHPYIIIGQLASIMYFLIILVLMPVASTIENNLLKW</sequence>
<feature type="chain" id="PRO_0000060731" description="Cytochrome b">
    <location>
        <begin position="1"/>
        <end position="379"/>
    </location>
</feature>
<feature type="transmembrane region" description="Helical" evidence="2">
    <location>
        <begin position="33"/>
        <end position="53"/>
    </location>
</feature>
<feature type="transmembrane region" description="Helical" evidence="2">
    <location>
        <begin position="77"/>
        <end position="98"/>
    </location>
</feature>
<feature type="transmembrane region" description="Helical" evidence="2">
    <location>
        <begin position="113"/>
        <end position="133"/>
    </location>
</feature>
<feature type="transmembrane region" description="Helical" evidence="2">
    <location>
        <begin position="178"/>
        <end position="198"/>
    </location>
</feature>
<feature type="transmembrane region" description="Helical" evidence="2">
    <location>
        <begin position="226"/>
        <end position="246"/>
    </location>
</feature>
<feature type="transmembrane region" description="Helical" evidence="2">
    <location>
        <begin position="288"/>
        <end position="308"/>
    </location>
</feature>
<feature type="transmembrane region" description="Helical" evidence="2">
    <location>
        <begin position="320"/>
        <end position="340"/>
    </location>
</feature>
<feature type="transmembrane region" description="Helical" evidence="2">
    <location>
        <begin position="347"/>
        <end position="367"/>
    </location>
</feature>
<feature type="binding site" description="axial binding residue" evidence="2">
    <location>
        <position position="83"/>
    </location>
    <ligand>
        <name>heme b</name>
        <dbReference type="ChEBI" id="CHEBI:60344"/>
        <label>b562</label>
    </ligand>
    <ligandPart>
        <name>Fe</name>
        <dbReference type="ChEBI" id="CHEBI:18248"/>
    </ligandPart>
</feature>
<feature type="binding site" description="axial binding residue" evidence="2">
    <location>
        <position position="97"/>
    </location>
    <ligand>
        <name>heme b</name>
        <dbReference type="ChEBI" id="CHEBI:60344"/>
        <label>b566</label>
    </ligand>
    <ligandPart>
        <name>Fe</name>
        <dbReference type="ChEBI" id="CHEBI:18248"/>
    </ligandPart>
</feature>
<feature type="binding site" description="axial binding residue" evidence="2">
    <location>
        <position position="182"/>
    </location>
    <ligand>
        <name>heme b</name>
        <dbReference type="ChEBI" id="CHEBI:60344"/>
        <label>b562</label>
    </ligand>
    <ligandPart>
        <name>Fe</name>
        <dbReference type="ChEBI" id="CHEBI:18248"/>
    </ligandPart>
</feature>
<feature type="binding site" description="axial binding residue" evidence="2">
    <location>
        <position position="196"/>
    </location>
    <ligand>
        <name>heme b</name>
        <dbReference type="ChEBI" id="CHEBI:60344"/>
        <label>b566</label>
    </ligand>
    <ligandPart>
        <name>Fe</name>
        <dbReference type="ChEBI" id="CHEBI:18248"/>
    </ligandPart>
</feature>
<feature type="binding site" evidence="2">
    <location>
        <position position="201"/>
    </location>
    <ligand>
        <name>a ubiquinone</name>
        <dbReference type="ChEBI" id="CHEBI:16389"/>
    </ligand>
</feature>
<evidence type="ECO:0000250" key="1"/>
<evidence type="ECO:0000250" key="2">
    <source>
        <dbReference type="UniProtKB" id="P00157"/>
    </source>
</evidence>
<evidence type="ECO:0000255" key="3">
    <source>
        <dbReference type="PROSITE-ProRule" id="PRU00967"/>
    </source>
</evidence>
<evidence type="ECO:0000255" key="4">
    <source>
        <dbReference type="PROSITE-ProRule" id="PRU00968"/>
    </source>
</evidence>